<keyword id="KW-0002">3D-structure</keyword>
<keyword id="KW-0281">Fimbrium</keyword>
<keyword id="KW-1185">Reference proteome</keyword>
<keyword id="KW-0732">Signal</keyword>
<gene>
    <name type="primary">ecpD</name>
    <name type="synonym">yagW</name>
    <name type="ordered locus">c0401</name>
</gene>
<name>ECPD_ECOL6</name>
<organism>
    <name type="scientific">Escherichia coli O6:H1 (strain CFT073 / ATCC 700928 / UPEC)</name>
    <dbReference type="NCBI Taxonomy" id="199310"/>
    <lineage>
        <taxon>Bacteria</taxon>
        <taxon>Pseudomonadati</taxon>
        <taxon>Pseudomonadota</taxon>
        <taxon>Gammaproteobacteria</taxon>
        <taxon>Enterobacterales</taxon>
        <taxon>Enterobacteriaceae</taxon>
        <taxon>Escherichia</taxon>
    </lineage>
</organism>
<sequence>MRVNLLIAMIIFALIWPATALRAAVSKTTWADAPAREFVFVENNSDDNFFVTPGGALDPRLTGANRWTGLKYNGSGTIYQQSLGYIDNGYNTGLYTNWKFDMWLENSPVSSPLTGLRCINWYAGCNMTTSLILPQTTDASGFYGATVTSGGAKWMHGMLSDAFYQYLQQMPVGSSFTMTINACQTSVNYDASSGARCKDQASGNWYVRNVTHTKAANLRLINTHSLAEVFINSDGVPTLGEGNADCRTQTIGSRSGLSCKMVNYTLQTNGLSNTSIHIFPAIANSSLASAVGAYDMQFSLNGSSWKPVSNTAYYYTFNEMKSADSIYVFFSSNFFKQMVNLGISDINTKDLFNFRFQNTTSPESGWYEFSTSNTLIIKPRDFSISIISDEYTQTPSREGYVGSGESALDFGYIVTTSGKTAADEVLIKVTGPAQVIGGRSYCVFSSDDGKAKVPFPATLSFITRNGATKTYDAGCDDSWRDMTDALWLTTPWTDISGEVGQMDKTTVKFSIPMDNAISLRTVDDNGWFGEVSASGEIHVQATWRNIN</sequence>
<comment type="function">
    <text evidence="1">Part of the ecpRABCDE operon, which encodes the E.coli common pilus (ECP). ECP is found in both commensal and pathogenic strains and plays a dual role in early-stage biofilm development and host cell recognition. Tip pilus adhesin, which is required for assembly of EcpA into fibers (By similarity).</text>
</comment>
<comment type="subunit">
    <text evidence="1 3">Forms polymers (By similarity). Interacts with EcpA.</text>
</comment>
<comment type="subcellular location">
    <subcellularLocation>
        <location evidence="1">Fimbrium</location>
    </subcellularLocation>
</comment>
<comment type="induction">
    <text evidence="1">Negatively regulated by H-NS. Positively regulated by IHF and EcpR (By similarity).</text>
</comment>
<comment type="similarity">
    <text evidence="4">Belongs to the EcpD/MatE family.</text>
</comment>
<protein>
    <recommendedName>
        <fullName>Fimbria adhesin EcpD</fullName>
    </recommendedName>
</protein>
<accession>Q8FKL3</accession>
<dbReference type="EMBL" id="AE014075">
    <property type="protein sequence ID" value="AAN78882.1"/>
    <property type="molecule type" value="Genomic_DNA"/>
</dbReference>
<dbReference type="RefSeq" id="WP_001265646.1">
    <property type="nucleotide sequence ID" value="NZ_CP051263.1"/>
</dbReference>
<dbReference type="PDB" id="3QS3">
    <property type="method" value="X-ray"/>
    <property type="resolution" value="2.10 A"/>
    <property type="chains" value="A/B/C/D/E/F/G/H/I/J/K/L=21-37"/>
</dbReference>
<dbReference type="PDBsum" id="3QS3"/>
<dbReference type="SMR" id="Q8FKL3"/>
<dbReference type="STRING" id="199310.c0401"/>
<dbReference type="KEGG" id="ecc:c0401"/>
<dbReference type="eggNOG" id="ENOG502Z8ZC">
    <property type="taxonomic scope" value="Bacteria"/>
</dbReference>
<dbReference type="HOGENOM" id="CLU_039494_0_0_6"/>
<dbReference type="BioCyc" id="ECOL199310:C0401-MONOMER"/>
<dbReference type="EvolutionaryTrace" id="Q8FKL3"/>
<dbReference type="Proteomes" id="UP000001410">
    <property type="component" value="Chromosome"/>
</dbReference>
<dbReference type="GO" id="GO:0009289">
    <property type="term" value="C:pilus"/>
    <property type="evidence" value="ECO:0007669"/>
    <property type="project" value="UniProtKB-SubCell"/>
</dbReference>
<reference key="1">
    <citation type="journal article" date="2002" name="Proc. Natl. Acad. Sci. U.S.A.">
        <title>Extensive mosaic structure revealed by the complete genome sequence of uropathogenic Escherichia coli.</title>
        <authorList>
            <person name="Welch R.A."/>
            <person name="Burland V."/>
            <person name="Plunkett G. III"/>
            <person name="Redford P."/>
            <person name="Roesch P."/>
            <person name="Rasko D."/>
            <person name="Buckles E.L."/>
            <person name="Liou S.-R."/>
            <person name="Boutin A."/>
            <person name="Hackett J."/>
            <person name="Stroud D."/>
            <person name="Mayhew G.F."/>
            <person name="Rose D.J."/>
            <person name="Zhou S."/>
            <person name="Schwartz D.C."/>
            <person name="Perna N.T."/>
            <person name="Mobley H.L.T."/>
            <person name="Donnenberg M.S."/>
            <person name="Blattner F.R."/>
        </authorList>
    </citation>
    <scope>NUCLEOTIDE SEQUENCE [LARGE SCALE GENOMIC DNA]</scope>
    <source>
        <strain>CFT073 / ATCC 700928 / UPEC</strain>
    </source>
</reference>
<reference key="2">
    <citation type="journal article" date="2012" name="Proc. Natl. Acad. Sci. U.S.A.">
        <title>Structural insights into the biogenesis and biofilm formation by the Escherichia coli common pilus.</title>
        <authorList>
            <person name="Garnett J.A."/>
            <person name="Martinez-Santos V.I."/>
            <person name="Saldana Z."/>
            <person name="Pape T."/>
            <person name="Hawthorne W."/>
            <person name="Chan J."/>
            <person name="Simpson P.J."/>
            <person name="Cota E."/>
            <person name="Puente J.L."/>
            <person name="Giron J.A."/>
            <person name="Matthews S."/>
        </authorList>
    </citation>
    <scope>X-RAY CRYSTALLOGRAPHY (2.1 ANGSTROMS) OF 21-37</scope>
    <scope>INTERACTION WITH ECPA</scope>
    <source>
        <strain>CFT073 / ATCC 700928 / UPEC</strain>
    </source>
</reference>
<feature type="signal peptide" evidence="2">
    <location>
        <begin position="1"/>
        <end position="20"/>
    </location>
</feature>
<feature type="chain" id="PRO_0000429537" description="Fimbria adhesin EcpD">
    <location>
        <begin position="21"/>
        <end position="547"/>
    </location>
</feature>
<feature type="strand" evidence="5">
    <location>
        <begin position="22"/>
        <end position="37"/>
    </location>
</feature>
<proteinExistence type="evidence at protein level"/>
<evidence type="ECO:0000250" key="1"/>
<evidence type="ECO:0000255" key="2"/>
<evidence type="ECO:0000269" key="3">
    <source>
    </source>
</evidence>
<evidence type="ECO:0000305" key="4"/>
<evidence type="ECO:0007829" key="5">
    <source>
        <dbReference type="PDB" id="3QS3"/>
    </source>
</evidence>